<evidence type="ECO:0000250" key="1">
    <source>
        <dbReference type="UniProtKB" id="C8VQG9"/>
    </source>
</evidence>
<evidence type="ECO:0000250" key="2">
    <source>
        <dbReference type="UniProtKB" id="C8VTV4"/>
    </source>
</evidence>
<evidence type="ECO:0000255" key="3">
    <source>
        <dbReference type="PROSITE-ProRule" id="PRU01165"/>
    </source>
</evidence>
<evidence type="ECO:0000256" key="4">
    <source>
        <dbReference type="SAM" id="MobiDB-lite"/>
    </source>
</evidence>
<evidence type="ECO:0000269" key="5">
    <source>
    </source>
</evidence>
<evidence type="ECO:0000269" key="6">
    <source>
    </source>
</evidence>
<evidence type="ECO:0000303" key="7">
    <source>
    </source>
</evidence>
<evidence type="ECO:0000305" key="8"/>
<gene>
    <name evidence="7" type="primary">VEL1</name>
    <name type="ORF">FFUJ_01649</name>
</gene>
<name>VEA_GIBF5</name>
<organism>
    <name type="scientific">Gibberella fujikuroi (strain CBS 195.34 / IMI 58289 / NRRL A-6831)</name>
    <name type="common">Bakanae and foot rot disease fungus</name>
    <name type="synonym">Fusarium fujikuroi</name>
    <dbReference type="NCBI Taxonomy" id="1279085"/>
    <lineage>
        <taxon>Eukaryota</taxon>
        <taxon>Fungi</taxon>
        <taxon>Dikarya</taxon>
        <taxon>Ascomycota</taxon>
        <taxon>Pezizomycotina</taxon>
        <taxon>Sordariomycetes</taxon>
        <taxon>Hypocreomycetidae</taxon>
        <taxon>Hypocreales</taxon>
        <taxon>Nectriaceae</taxon>
        <taxon>Fusarium</taxon>
        <taxon>Fusarium fujikuroi species complex</taxon>
    </lineage>
</organism>
<keyword id="KW-0963">Cytoplasm</keyword>
<keyword id="KW-0539">Nucleus</keyword>
<keyword id="KW-1185">Reference proteome</keyword>
<keyword id="KW-0749">Sporulation</keyword>
<keyword id="KW-0804">Transcription</keyword>
<keyword id="KW-0805">Transcription regulation</keyword>
<sequence length="530" mass="58837">MATPSSIPAEPKRDVVNRIHRVTRGNRSLWYQMTVLQQPERARACGSGSKANSDRRPVDPPPVVELRIIEGPSVEEGKDITFDYNANFFLYASLEHARPLARGRVNTPAAGNPPILTGVPASGMAYLDRPTEAGYFIFPDLSVRHEGLYILTFSLFETTKEERDFDLEPADGDLPPGVDYRMEIKTDPFSVYSAKKFPGLMESTQLSKTVADQGCQVRIRRDVRMRKRESKPGAGNSNSGGNGFERREEDFGRRRTITPASEDPHSIRNRSHSNSSEQRTPYTDASRRPSMVDSYPPPPPPPSYEPAPSASRHLDFGDSSAAQYPTPRQYAHQPGLQITPGPPSGSYAPTAQSPYSKTDAPYGYVNRNIPPSCPSPAPSVKHDLYDRRQSTSSYVPPSPSVYSTEGHHRRDSRPSYPPTPVAAPRPRPMHSQTSLPALKIDQLVSPVSPLPPIEPQTGPAPELPPINVGGKRKHESVFAQSTRPLHNGQRQVDPHYGRSHRGYSPDHDQGWYSRADGQISSVQFNRYYDE</sequence>
<reference key="1">
    <citation type="journal article" date="2010" name="Mol. Microbiol.">
        <title>FfVel1 and FfLae1, components of a velvet-like complex in Fusarium fujikuroi, affect differentiation, secondary metabolism and virulence.</title>
        <authorList>
            <person name="Wiemann P."/>
            <person name="Brown D.W."/>
            <person name="Kleigrewe K."/>
            <person name="Bok J.W."/>
            <person name="Keller N.P."/>
            <person name="Humpf H.U."/>
            <person name="Tudzynski B."/>
        </authorList>
    </citation>
    <scope>NUCLEOTIDE SEQUENCE [GENOMIC DNA]</scope>
    <scope>INDUCTION</scope>
    <scope>SUBCELLULAR LOCATION</scope>
    <scope>INTERACTION WITH LAEA</scope>
    <scope>DISRUPTION PHENOTYPE</scope>
    <source>
        <strain>CBS 195.34 / IMI 58289 / NRRL A-6831</strain>
    </source>
</reference>
<reference key="2">
    <citation type="journal article" date="2013" name="PLoS Pathog.">
        <title>Deciphering the cryptic genome: genome-wide analyses of the rice pathogen Fusarium fujikuroi reveal complex regulation of secondary metabolism and novel metabolites.</title>
        <authorList>
            <person name="Wiemann P."/>
            <person name="Sieber C.M.K."/>
            <person name="von Bargen K.W."/>
            <person name="Studt L."/>
            <person name="Niehaus E.-M."/>
            <person name="Espino J.J."/>
            <person name="Huss K."/>
            <person name="Michielse C.B."/>
            <person name="Albermann S."/>
            <person name="Wagner D."/>
            <person name="Bergner S.V."/>
            <person name="Connolly L.R."/>
            <person name="Fischer A."/>
            <person name="Reuter G."/>
            <person name="Kleigrewe K."/>
            <person name="Bald T."/>
            <person name="Wingfield B.D."/>
            <person name="Ophir R."/>
            <person name="Freeman S."/>
            <person name="Hippler M."/>
            <person name="Smith K.M."/>
            <person name="Brown D.W."/>
            <person name="Proctor R.H."/>
            <person name="Muensterkoetter M."/>
            <person name="Freitag M."/>
            <person name="Humpf H.-U."/>
            <person name="Gueldener U."/>
            <person name="Tudzynski B."/>
        </authorList>
    </citation>
    <scope>NUCLEOTIDE SEQUENCE [LARGE SCALE GENOMIC DNA]</scope>
    <source>
        <strain>CBS 195.34 / IMI 58289 / NRRL A-6831</strain>
    </source>
</reference>
<reference key="3">
    <citation type="journal article" date="2014" name="Appl. Microbiol. Biotechnol.">
        <title>Characterization of the fusaric acid gene cluster in Fusarium fujikuroi.</title>
        <authorList>
            <person name="Niehaus E.M."/>
            <person name="von Bargen K.W."/>
            <person name="Espino J.J."/>
            <person name="Pfannmueller A."/>
            <person name="Humpf H.U."/>
            <person name="Tudzynski B."/>
        </authorList>
    </citation>
    <scope>FUNCTION</scope>
    <scope>DISRUPTION PHENOTYPE</scope>
</reference>
<accession>S0DHV6</accession>
<accession>E0WDF7</accession>
<feature type="chain" id="PRO_0000435767" description="Developmental and secondary metabolism regulator VEL1">
    <location>
        <begin position="1"/>
        <end position="530"/>
    </location>
</feature>
<feature type="domain" description="Velvet" evidence="3">
    <location>
        <begin position="26"/>
        <end position="220"/>
    </location>
</feature>
<feature type="region of interest" description="Disordered" evidence="4">
    <location>
        <begin position="206"/>
        <end position="516"/>
    </location>
</feature>
<feature type="region of interest" description="PEST" evidence="2">
    <location>
        <begin position="429"/>
        <end position="460"/>
    </location>
</feature>
<feature type="short sequence motif" description="Nuclear localization signal" evidence="2">
    <location>
        <begin position="40"/>
        <end position="45"/>
    </location>
</feature>
<feature type="compositionally biased region" description="Basic and acidic residues" evidence="4">
    <location>
        <begin position="244"/>
        <end position="253"/>
    </location>
</feature>
<feature type="compositionally biased region" description="Pro residues" evidence="4">
    <location>
        <begin position="295"/>
        <end position="305"/>
    </location>
</feature>
<feature type="compositionally biased region" description="Polar residues" evidence="4">
    <location>
        <begin position="347"/>
        <end position="356"/>
    </location>
</feature>
<feature type="compositionally biased region" description="Basic and acidic residues" evidence="4">
    <location>
        <begin position="380"/>
        <end position="389"/>
    </location>
</feature>
<feature type="compositionally biased region" description="Low complexity" evidence="4">
    <location>
        <begin position="390"/>
        <end position="404"/>
    </location>
</feature>
<feature type="compositionally biased region" description="Pro residues" evidence="4">
    <location>
        <begin position="415"/>
        <end position="426"/>
    </location>
</feature>
<feature type="compositionally biased region" description="Polar residues" evidence="4">
    <location>
        <begin position="478"/>
        <end position="490"/>
    </location>
</feature>
<protein>
    <recommendedName>
        <fullName evidence="8">Developmental and secondary metabolism regulator VEL1</fullName>
    </recommendedName>
    <alternativeName>
        <fullName evidence="8">Velvet complex subunit 1</fullName>
    </alternativeName>
</protein>
<comment type="function">
    <text evidence="2 5 6">Component of the velvet transcription factor complex that controls sexual/asexual developmental ratio in response to light, promoting sexual development in the darkness while stimulating asexual sporulation under illumination (PubMed:20572938). The velvet complex hat acts as a global regulator for secondary metabolite gene expression (PubMed:20572938). Controls positively the expression of the gibberellins, fumonisins and fusarin C gene clusters (PubMed:20572938). Controls the expression of the fusaric acid gene cluster (PubMed:24389666). Controls negatively the expression of the bikaverin gene cluster (PubMed:20572938). Regulates the expression of laeA (PubMed:20572938). Plays a crucial role in virulence (PubMed:20572938).</text>
</comment>
<comment type="subunit">
    <text evidence="1 5">Component of the heterotrimeric velvet complex composed of LAE1, VEL1 and VEL2; VEL1 acting as a bridging protein between LAE1 and VEL2 (By similarity). Interacts with LAE1 (PubMed:20572938).</text>
</comment>
<comment type="subcellular location">
    <subcellularLocation>
        <location evidence="5">Nucleus</location>
    </subcellularLocation>
    <subcellularLocation>
        <location evidence="2">Cytoplasm</location>
    </subcellularLocation>
    <text evidence="2">Enriched in the nucleus in the dark (By similarity).</text>
</comment>
<comment type="induction">
    <text evidence="5">Expression is repressed in media containing high amounts of nitrogen (PubMed:20572938).</text>
</comment>
<comment type="domain">
    <text evidence="2">The C-terminal PEST domain is a region rich in proline, glutamic acid, serine and threonine residues that is required for the light-dependent regulation of development and secondary metabolism (By similarity).</text>
</comment>
<comment type="disruption phenotype">
    <text evidence="5 6">Impairs the production of gibberellins, fumonisins and fusarin C (PubMed:20572938). Reduces both the fusaric acid gene cluster expression and production of fusaric acid (PubMed:24389666). Affects conidiation associated with stunted aerial hyphae (PubMed:20572938).</text>
</comment>
<comment type="similarity">
    <text evidence="8">Belongs to the velvet family. VeA subfamily.</text>
</comment>
<proteinExistence type="evidence at protein level"/>
<dbReference type="EMBL" id="FN548142">
    <property type="protein sequence ID" value="CBE54373.1"/>
    <property type="molecule type" value="Genomic_DNA"/>
</dbReference>
<dbReference type="EMBL" id="HF679023">
    <property type="protein sequence ID" value="CCT61859.1"/>
    <property type="molecule type" value="Genomic_DNA"/>
</dbReference>
<dbReference type="SMR" id="S0DHV6"/>
<dbReference type="STRING" id="1279085.S0DHV6"/>
<dbReference type="VEuPathDB" id="FungiDB:FFUJ_01649"/>
<dbReference type="Proteomes" id="UP000016800">
    <property type="component" value="Chromosome 1"/>
</dbReference>
<dbReference type="GO" id="GO:0005737">
    <property type="term" value="C:cytoplasm"/>
    <property type="evidence" value="ECO:0007669"/>
    <property type="project" value="UniProtKB-SubCell"/>
</dbReference>
<dbReference type="GO" id="GO:0005634">
    <property type="term" value="C:nucleus"/>
    <property type="evidence" value="ECO:0007669"/>
    <property type="project" value="UniProtKB-SubCell"/>
</dbReference>
<dbReference type="GO" id="GO:0030435">
    <property type="term" value="P:sporulation resulting in formation of a cellular spore"/>
    <property type="evidence" value="ECO:0007669"/>
    <property type="project" value="UniProtKB-KW"/>
</dbReference>
<dbReference type="FunFam" id="2.60.40.3960:FF:000001">
    <property type="entry name" value="Sexual development activator VeA"/>
    <property type="match status" value="1"/>
</dbReference>
<dbReference type="Gene3D" id="2.60.40.3960">
    <property type="entry name" value="Velvet domain"/>
    <property type="match status" value="1"/>
</dbReference>
<dbReference type="InterPro" id="IPR021740">
    <property type="entry name" value="Velvet"/>
</dbReference>
<dbReference type="InterPro" id="IPR037525">
    <property type="entry name" value="Velvet_dom"/>
</dbReference>
<dbReference type="InterPro" id="IPR038491">
    <property type="entry name" value="Velvet_dom_sf"/>
</dbReference>
<dbReference type="PANTHER" id="PTHR33572:SF14">
    <property type="entry name" value="DEVELOPMENTAL AND SECONDARY METABOLISM REGULATOR VEA"/>
    <property type="match status" value="1"/>
</dbReference>
<dbReference type="PANTHER" id="PTHR33572">
    <property type="entry name" value="SPORE DEVELOPMENT REGULATOR VOSA"/>
    <property type="match status" value="1"/>
</dbReference>
<dbReference type="Pfam" id="PF11754">
    <property type="entry name" value="Velvet"/>
    <property type="match status" value="2"/>
</dbReference>
<dbReference type="PROSITE" id="PS51821">
    <property type="entry name" value="VELVET"/>
    <property type="match status" value="1"/>
</dbReference>